<name>OPS3_MANSE</name>
<organism>
    <name type="scientific">Manduca sexta</name>
    <name type="common">Tobacco hawkmoth</name>
    <name type="synonym">Tobacco hornworm</name>
    <dbReference type="NCBI Taxonomy" id="7130"/>
    <lineage>
        <taxon>Eukaryota</taxon>
        <taxon>Metazoa</taxon>
        <taxon>Ecdysozoa</taxon>
        <taxon>Arthropoda</taxon>
        <taxon>Hexapoda</taxon>
        <taxon>Insecta</taxon>
        <taxon>Pterygota</taxon>
        <taxon>Neoptera</taxon>
        <taxon>Endopterygota</taxon>
        <taxon>Lepidoptera</taxon>
        <taxon>Glossata</taxon>
        <taxon>Ditrysia</taxon>
        <taxon>Bombycoidea</taxon>
        <taxon>Sphingidae</taxon>
        <taxon>Sphinginae</taxon>
        <taxon>Sphingini</taxon>
        <taxon>Manduca</taxon>
    </lineage>
</organism>
<reference evidence="8" key="1">
    <citation type="journal article" date="1997" name="J. Exp. Biol.">
        <title>Three opsin-encoding cDNAS from the compound eye of Manduca sexta.</title>
        <authorList>
            <person name="Chase M.R."/>
            <person name="Bennett R.R."/>
            <person name="White R.H."/>
        </authorList>
    </citation>
    <scope>NUCLEOTIDE SEQUENCE [MRNA]</scope>
    <source>
        <tissue evidence="8">Retina</tissue>
    </source>
</reference>
<reference evidence="7" key="2">
    <citation type="journal article" date="2003" name="J. Exp. Biol.">
        <title>The retina of Manduca sexta: rhodopsin expression, the mosaic of green-, blue- and UV-sensitive photoreceptors, and regional specialization.</title>
        <authorList>
            <person name="White R.H."/>
            <person name="Xu H."/>
            <person name="Munch T.A."/>
            <person name="Bennett R.R."/>
            <person name="Grable E.A."/>
        </authorList>
    </citation>
    <scope>TISSUE SPECIFICITY</scope>
    <source>
        <tissue evidence="4">Retina</tissue>
    </source>
</reference>
<comment type="function">
    <text evidence="1 7">Visual pigments are the light-absorbing molecules that mediate vision. They consist of an apoprotein, opsin, covalently linked to cis-retinal. May play a role in photoperiodic photoreception.</text>
</comment>
<comment type="subcellular location">
    <subcellularLocation>
        <location evidence="2">Membrane</location>
        <topology evidence="2">Multi-pass membrane protein</topology>
    </subcellularLocation>
</comment>
<comment type="tissue specificity">
    <text evidence="4">In the retina, expression is essentially uniformly distributed but a higher level is seen in the ventral region where the B-cells are localized.</text>
</comment>
<comment type="similarity">
    <text evidence="3">Belongs to the G-protein coupled receptor 1 family. Opsin subfamily.</text>
</comment>
<keyword id="KW-0157">Chromophore</keyword>
<keyword id="KW-1015">Disulfide bond</keyword>
<keyword id="KW-0297">G-protein coupled receptor</keyword>
<keyword id="KW-0325">Glycoprotein</keyword>
<keyword id="KW-0472">Membrane</keyword>
<keyword id="KW-0600">Photoreceptor protein</keyword>
<keyword id="KW-0675">Receptor</keyword>
<keyword id="KW-0681">Retinal protein</keyword>
<keyword id="KW-0716">Sensory transduction</keyword>
<keyword id="KW-0807">Transducer</keyword>
<keyword id="KW-0812">Transmembrane</keyword>
<keyword id="KW-1133">Transmembrane helix</keyword>
<keyword id="KW-0844">Vision</keyword>
<sequence length="384" mass="43543">MATNFTQELYEIGPMAYPLKMISKDVAEHMLGWNIPEEHQDLVHDHWRNFPAVSKYWHYVLALIYTMLMVTSLTGNGIVIWIFSTSKSLRSASNMFVINLAVFDLMMMLEMPLLIMNSFYQRLVGYQLGCDVYAVLGSLSGIGGAITNAVIAFDRYKTISSPLDGRINTVQAGLLIAFTWFWALPFTILPAFRIWGRFVPEGFLTTCSFDYFTEDQDTEVFVACIFVWSYCIPMALICYFYSQLFGAVRLHERMLQEQAKKMNVKSLASNKEDNSRSVEIRIAKVAFTIFFLFICAWTPYAFVTMTGAFGDRTLLTPIATMIPAVCCKVVSCIDPWVYAINHPRYRAELQKRLPWMGVREQDPDAVSTTTSVATAGFQPPAAEA</sequence>
<accession>O96107</accession>
<dbReference type="EMBL" id="AD001674">
    <property type="protein sequence ID" value="AAD11966.1"/>
    <property type="molecule type" value="mRNA"/>
</dbReference>
<dbReference type="SMR" id="O96107"/>
<dbReference type="GlyCosmos" id="O96107">
    <property type="glycosylation" value="1 site, No reported glycans"/>
</dbReference>
<dbReference type="OrthoDB" id="2105199at2759"/>
<dbReference type="GO" id="GO:0016020">
    <property type="term" value="C:membrane"/>
    <property type="evidence" value="ECO:0007669"/>
    <property type="project" value="UniProtKB-SubCell"/>
</dbReference>
<dbReference type="GO" id="GO:0004930">
    <property type="term" value="F:G protein-coupled receptor activity"/>
    <property type="evidence" value="ECO:0007669"/>
    <property type="project" value="UniProtKB-KW"/>
</dbReference>
<dbReference type="GO" id="GO:0009881">
    <property type="term" value="F:photoreceptor activity"/>
    <property type="evidence" value="ECO:0007669"/>
    <property type="project" value="UniProtKB-KW"/>
</dbReference>
<dbReference type="GO" id="GO:0007602">
    <property type="term" value="P:phototransduction"/>
    <property type="evidence" value="ECO:0007669"/>
    <property type="project" value="UniProtKB-KW"/>
</dbReference>
<dbReference type="GO" id="GO:0007601">
    <property type="term" value="P:visual perception"/>
    <property type="evidence" value="ECO:0007669"/>
    <property type="project" value="UniProtKB-KW"/>
</dbReference>
<dbReference type="CDD" id="cd15079">
    <property type="entry name" value="7tmA_photoreceptors_insect"/>
    <property type="match status" value="1"/>
</dbReference>
<dbReference type="FunFam" id="1.20.1070.10:FF:000044">
    <property type="entry name" value="Opsin, ultraviolet-sensitive"/>
    <property type="match status" value="1"/>
</dbReference>
<dbReference type="Gene3D" id="1.20.1070.10">
    <property type="entry name" value="Rhodopsin 7-helix transmembrane proteins"/>
    <property type="match status" value="1"/>
</dbReference>
<dbReference type="InterPro" id="IPR050125">
    <property type="entry name" value="GPCR_opsins"/>
</dbReference>
<dbReference type="InterPro" id="IPR000276">
    <property type="entry name" value="GPCR_Rhodpsn"/>
</dbReference>
<dbReference type="InterPro" id="IPR017452">
    <property type="entry name" value="GPCR_Rhodpsn_7TM"/>
</dbReference>
<dbReference type="InterPro" id="IPR001760">
    <property type="entry name" value="Opsin"/>
</dbReference>
<dbReference type="PANTHER" id="PTHR24240">
    <property type="entry name" value="OPSIN"/>
    <property type="match status" value="1"/>
</dbReference>
<dbReference type="Pfam" id="PF00001">
    <property type="entry name" value="7tm_1"/>
    <property type="match status" value="1"/>
</dbReference>
<dbReference type="PRINTS" id="PR00237">
    <property type="entry name" value="GPCRRHODOPSN"/>
</dbReference>
<dbReference type="PRINTS" id="PR00577">
    <property type="entry name" value="OPSINRH3RH4"/>
</dbReference>
<dbReference type="SUPFAM" id="SSF81321">
    <property type="entry name" value="Family A G protein-coupled receptor-like"/>
    <property type="match status" value="1"/>
</dbReference>
<dbReference type="PROSITE" id="PS00237">
    <property type="entry name" value="G_PROTEIN_RECEP_F1_1"/>
    <property type="match status" value="1"/>
</dbReference>
<dbReference type="PROSITE" id="PS50262">
    <property type="entry name" value="G_PROTEIN_RECEP_F1_2"/>
    <property type="match status" value="1"/>
</dbReference>
<proteinExistence type="evidence at transcript level"/>
<feature type="chain" id="PRO_0000389624" description="Opsin-3">
    <location>
        <begin position="1"/>
        <end position="384"/>
    </location>
</feature>
<feature type="topological domain" description="Extracellular" evidence="2">
    <location>
        <begin position="1"/>
        <end position="62"/>
    </location>
</feature>
<feature type="transmembrane region" description="Helical; Name=1" evidence="2">
    <location>
        <begin position="63"/>
        <end position="83"/>
    </location>
</feature>
<feature type="topological domain" description="Cytoplasmic" evidence="2">
    <location>
        <begin position="84"/>
        <end position="94"/>
    </location>
</feature>
<feature type="transmembrane region" description="Helical; Name=2" evidence="2">
    <location>
        <begin position="95"/>
        <end position="115"/>
    </location>
</feature>
<feature type="topological domain" description="Extracellular" evidence="2">
    <location>
        <begin position="116"/>
        <end position="132"/>
    </location>
</feature>
<feature type="transmembrane region" description="Helical; Name=3" evidence="2">
    <location>
        <begin position="133"/>
        <end position="153"/>
    </location>
</feature>
<feature type="topological domain" description="Cytoplasmic" evidence="2">
    <location>
        <begin position="154"/>
        <end position="171"/>
    </location>
</feature>
<feature type="transmembrane region" description="Helical; Name=4" evidence="2">
    <location>
        <begin position="172"/>
        <end position="192"/>
    </location>
</feature>
<feature type="topological domain" description="Extracellular" evidence="2">
    <location>
        <begin position="193"/>
        <end position="219"/>
    </location>
</feature>
<feature type="transmembrane region" description="Helical; Name=5" evidence="2">
    <location>
        <begin position="220"/>
        <end position="240"/>
    </location>
</feature>
<feature type="topological domain" description="Cytoplasmic" evidence="2">
    <location>
        <begin position="241"/>
        <end position="284"/>
    </location>
</feature>
<feature type="transmembrane region" description="Helical; Name=6" evidence="2">
    <location>
        <begin position="285"/>
        <end position="305"/>
    </location>
</feature>
<feature type="topological domain" description="Extracellular" evidence="2">
    <location>
        <begin position="306"/>
        <end position="312"/>
    </location>
</feature>
<feature type="transmembrane region" description="Helical; Name=7" evidence="2">
    <location>
        <begin position="313"/>
        <end position="333"/>
    </location>
</feature>
<feature type="topological domain" description="Cytoplasmic" evidence="2">
    <location>
        <begin position="334"/>
        <end position="384"/>
    </location>
</feature>
<feature type="glycosylation site" description="N-linked (GlcNAc...) asparagine" evidence="2">
    <location>
        <position position="4"/>
    </location>
</feature>
<feature type="disulfide bond" evidence="3">
    <location>
        <begin position="130"/>
        <end position="207"/>
    </location>
</feature>
<gene>
    <name type="primary">OP3</name>
</gene>
<protein>
    <recommendedName>
        <fullName>Opsin-3</fullName>
        <shortName evidence="6">MANOP3</shortName>
    </recommendedName>
    <alternativeName>
        <fullName evidence="6">Rhodopsin 3, short-wavelength</fullName>
    </alternativeName>
    <alternativeName>
        <fullName evidence="5">Rhodopsin P450</fullName>
    </alternativeName>
</protein>
<evidence type="ECO:0000250" key="1">
    <source>
        <dbReference type="UniProtKB" id="Q95YI3"/>
    </source>
</evidence>
<evidence type="ECO:0000255" key="2"/>
<evidence type="ECO:0000255" key="3">
    <source>
        <dbReference type="PROSITE-ProRule" id="PRU00521"/>
    </source>
</evidence>
<evidence type="ECO:0000269" key="4">
    <source>
    </source>
</evidence>
<evidence type="ECO:0000303" key="5">
    <source>
    </source>
</evidence>
<evidence type="ECO:0000303" key="6">
    <source>
    </source>
</evidence>
<evidence type="ECO:0000305" key="7"/>
<evidence type="ECO:0000312" key="8">
    <source>
        <dbReference type="EMBL" id="AAD11966.1"/>
    </source>
</evidence>